<evidence type="ECO:0000255" key="1">
    <source>
        <dbReference type="HAMAP-Rule" id="MF_00549"/>
    </source>
</evidence>
<protein>
    <recommendedName>
        <fullName evidence="1">Methylglyoxal synthase</fullName>
        <shortName evidence="1">MGS</shortName>
        <ecNumber evidence="1">4.2.3.3</ecNumber>
    </recommendedName>
</protein>
<name>MGSA_LEPIC</name>
<gene>
    <name evidence="1" type="primary">mgsA</name>
    <name type="ordered locus">LIC_12733</name>
</gene>
<proteinExistence type="inferred from homology"/>
<feature type="chain" id="PRO_0000178632" description="Methylglyoxal synthase">
    <location>
        <begin position="1"/>
        <end position="148"/>
    </location>
</feature>
<feature type="domain" description="MGS-like" evidence="1">
    <location>
        <begin position="4"/>
        <end position="148"/>
    </location>
</feature>
<feature type="active site" description="Proton donor/acceptor" evidence="1">
    <location>
        <position position="69"/>
    </location>
</feature>
<feature type="binding site" evidence="1">
    <location>
        <position position="17"/>
    </location>
    <ligand>
        <name>substrate</name>
    </ligand>
</feature>
<feature type="binding site" evidence="1">
    <location>
        <position position="21"/>
    </location>
    <ligand>
        <name>substrate</name>
    </ligand>
</feature>
<feature type="binding site" evidence="1">
    <location>
        <begin position="43"/>
        <end position="46"/>
    </location>
    <ligand>
        <name>substrate</name>
    </ligand>
</feature>
<feature type="binding site" evidence="1">
    <location>
        <begin position="63"/>
        <end position="64"/>
    </location>
    <ligand>
        <name>substrate</name>
    </ligand>
</feature>
<feature type="binding site" evidence="1">
    <location>
        <position position="96"/>
    </location>
    <ligand>
        <name>substrate</name>
    </ligand>
</feature>
<accession>Q72NU6</accession>
<reference key="1">
    <citation type="journal article" date="2004" name="J. Bacteriol.">
        <title>Comparative genomics of two Leptospira interrogans serovars reveals novel insights into physiology and pathogenesis.</title>
        <authorList>
            <person name="Nascimento A.L.T.O."/>
            <person name="Ko A.I."/>
            <person name="Martins E.A.L."/>
            <person name="Monteiro-Vitorello C.B."/>
            <person name="Ho P.L."/>
            <person name="Haake D.A."/>
            <person name="Verjovski-Almeida S."/>
            <person name="Hartskeerl R.A."/>
            <person name="Marques M.V."/>
            <person name="Oliveira M.C."/>
            <person name="Menck C.F.M."/>
            <person name="Leite L.C.C."/>
            <person name="Carrer H."/>
            <person name="Coutinho L.L."/>
            <person name="Degrave W.M."/>
            <person name="Dellagostin O.A."/>
            <person name="El-Dorry H."/>
            <person name="Ferro E.S."/>
            <person name="Ferro M.I.T."/>
            <person name="Furlan L.R."/>
            <person name="Gamberini M."/>
            <person name="Giglioti E.A."/>
            <person name="Goes-Neto A."/>
            <person name="Goldman G.H."/>
            <person name="Goldman M.H.S."/>
            <person name="Harakava R."/>
            <person name="Jeronimo S.M.B."/>
            <person name="Junqueira-de-Azevedo I.L.M."/>
            <person name="Kimura E.T."/>
            <person name="Kuramae E.E."/>
            <person name="Lemos E.G.M."/>
            <person name="Lemos M.V.F."/>
            <person name="Marino C.L."/>
            <person name="Nunes L.R."/>
            <person name="de Oliveira R.C."/>
            <person name="Pereira G.G."/>
            <person name="Reis M.S."/>
            <person name="Schriefer A."/>
            <person name="Siqueira W.J."/>
            <person name="Sommer P."/>
            <person name="Tsai S.M."/>
            <person name="Simpson A.J.G."/>
            <person name="Ferro J.A."/>
            <person name="Camargo L.E.A."/>
            <person name="Kitajima J.P."/>
            <person name="Setubal J.C."/>
            <person name="Van Sluys M.A."/>
        </authorList>
    </citation>
    <scope>NUCLEOTIDE SEQUENCE [LARGE SCALE GENOMIC DNA]</scope>
    <source>
        <strain>Fiocruz L1-130</strain>
    </source>
</reference>
<dbReference type="EC" id="4.2.3.3" evidence="1"/>
<dbReference type="EMBL" id="AE016823">
    <property type="protein sequence ID" value="AAS71290.1"/>
    <property type="molecule type" value="Genomic_DNA"/>
</dbReference>
<dbReference type="RefSeq" id="WP_000665953.1">
    <property type="nucleotide sequence ID" value="NC_005823.1"/>
</dbReference>
<dbReference type="SMR" id="Q72NU6"/>
<dbReference type="KEGG" id="lic:LIC_12733"/>
<dbReference type="HOGENOM" id="CLU_120420_0_1_12"/>
<dbReference type="Proteomes" id="UP000007037">
    <property type="component" value="Chromosome I"/>
</dbReference>
<dbReference type="GO" id="GO:0005829">
    <property type="term" value="C:cytosol"/>
    <property type="evidence" value="ECO:0007669"/>
    <property type="project" value="TreeGrafter"/>
</dbReference>
<dbReference type="GO" id="GO:0008929">
    <property type="term" value="F:methylglyoxal synthase activity"/>
    <property type="evidence" value="ECO:0007669"/>
    <property type="project" value="UniProtKB-UniRule"/>
</dbReference>
<dbReference type="GO" id="GO:0019242">
    <property type="term" value="P:methylglyoxal biosynthetic process"/>
    <property type="evidence" value="ECO:0007669"/>
    <property type="project" value="UniProtKB-UniRule"/>
</dbReference>
<dbReference type="CDD" id="cd01422">
    <property type="entry name" value="MGS"/>
    <property type="match status" value="1"/>
</dbReference>
<dbReference type="FunFam" id="3.40.50.1380:FF:000006">
    <property type="entry name" value="Methylglyoxal synthase"/>
    <property type="match status" value="1"/>
</dbReference>
<dbReference type="Gene3D" id="3.40.50.1380">
    <property type="entry name" value="Methylglyoxal synthase-like domain"/>
    <property type="match status" value="1"/>
</dbReference>
<dbReference type="HAMAP" id="MF_00549">
    <property type="entry name" value="Methylglyoxal_synth"/>
    <property type="match status" value="1"/>
</dbReference>
<dbReference type="InterPro" id="IPR004363">
    <property type="entry name" value="Methylgl_synth"/>
</dbReference>
<dbReference type="InterPro" id="IPR018148">
    <property type="entry name" value="Methylglyoxal_synth_AS"/>
</dbReference>
<dbReference type="InterPro" id="IPR011607">
    <property type="entry name" value="MGS-like_dom"/>
</dbReference>
<dbReference type="InterPro" id="IPR036914">
    <property type="entry name" value="MGS-like_dom_sf"/>
</dbReference>
<dbReference type="NCBIfam" id="TIGR00160">
    <property type="entry name" value="MGSA"/>
    <property type="match status" value="1"/>
</dbReference>
<dbReference type="NCBIfam" id="NF003559">
    <property type="entry name" value="PRK05234.1"/>
    <property type="match status" value="1"/>
</dbReference>
<dbReference type="PANTHER" id="PTHR30492">
    <property type="entry name" value="METHYLGLYOXAL SYNTHASE"/>
    <property type="match status" value="1"/>
</dbReference>
<dbReference type="PANTHER" id="PTHR30492:SF0">
    <property type="entry name" value="METHYLGLYOXAL SYNTHASE"/>
    <property type="match status" value="1"/>
</dbReference>
<dbReference type="Pfam" id="PF02142">
    <property type="entry name" value="MGS"/>
    <property type="match status" value="1"/>
</dbReference>
<dbReference type="PIRSF" id="PIRSF006614">
    <property type="entry name" value="Methylglyox_syn"/>
    <property type="match status" value="1"/>
</dbReference>
<dbReference type="SMART" id="SM00851">
    <property type="entry name" value="MGS"/>
    <property type="match status" value="1"/>
</dbReference>
<dbReference type="SUPFAM" id="SSF52335">
    <property type="entry name" value="Methylglyoxal synthase-like"/>
    <property type="match status" value="1"/>
</dbReference>
<dbReference type="PROSITE" id="PS01335">
    <property type="entry name" value="METHYLGLYOXAL_SYNTH"/>
    <property type="match status" value="1"/>
</dbReference>
<dbReference type="PROSITE" id="PS51855">
    <property type="entry name" value="MGS"/>
    <property type="match status" value="1"/>
</dbReference>
<organism>
    <name type="scientific">Leptospira interrogans serogroup Icterohaemorrhagiae serovar copenhageni (strain Fiocruz L1-130)</name>
    <dbReference type="NCBI Taxonomy" id="267671"/>
    <lineage>
        <taxon>Bacteria</taxon>
        <taxon>Pseudomonadati</taxon>
        <taxon>Spirochaetota</taxon>
        <taxon>Spirochaetia</taxon>
        <taxon>Leptospirales</taxon>
        <taxon>Leptospiraceae</taxon>
        <taxon>Leptospira</taxon>
    </lineage>
</organism>
<comment type="function">
    <text evidence="1">Catalyzes the formation of methylglyoxal from dihydroxyacetone phosphate.</text>
</comment>
<comment type="catalytic activity">
    <reaction evidence="1">
        <text>dihydroxyacetone phosphate = methylglyoxal + phosphate</text>
        <dbReference type="Rhea" id="RHEA:17937"/>
        <dbReference type="ChEBI" id="CHEBI:17158"/>
        <dbReference type="ChEBI" id="CHEBI:43474"/>
        <dbReference type="ChEBI" id="CHEBI:57642"/>
        <dbReference type="EC" id="4.2.3.3"/>
    </reaction>
</comment>
<comment type="similarity">
    <text evidence="1">Belongs to the methylglyoxal synthase family.</text>
</comment>
<keyword id="KW-0456">Lyase</keyword>
<sequence length="148" mass="16727">MKEVSVPAIKRIVLIAHDNRKEDLVNWVKTHREILSKHQLYGTGTTGKLISEETELPVYRFLSGPLGGDQQIGAKIAEGDLDIVIFFWDPLTAQPHDPDVKALLRIAVLYNVPMACNRSTADYMISSPQFTKTYKKILLSYNTKVKKD</sequence>